<dbReference type="EC" id="2.3.1.9"/>
<dbReference type="EMBL" id="U00096">
    <property type="protein sequence ID" value="AAC75284.1"/>
    <property type="molecule type" value="Genomic_DNA"/>
</dbReference>
<dbReference type="EMBL" id="AP009048">
    <property type="protein sequence ID" value="BAA16020.1"/>
    <property type="molecule type" value="Genomic_DNA"/>
</dbReference>
<dbReference type="PIR" id="F64992">
    <property type="entry name" value="F64992"/>
</dbReference>
<dbReference type="RefSeq" id="NP_416728.1">
    <property type="nucleotide sequence ID" value="NC_000913.3"/>
</dbReference>
<dbReference type="RefSeq" id="WP_000786547.1">
    <property type="nucleotide sequence ID" value="NZ_SSZK01000030.1"/>
</dbReference>
<dbReference type="PDB" id="4WYS">
    <property type="method" value="X-ray"/>
    <property type="resolution" value="2.10 A"/>
    <property type="chains" value="A/B/C/D=1-393"/>
</dbReference>
<dbReference type="PDB" id="5F0V">
    <property type="method" value="X-ray"/>
    <property type="resolution" value="1.80 A"/>
    <property type="chains" value="A/B/C/D=1-393"/>
</dbReference>
<dbReference type="PDB" id="5F38">
    <property type="method" value="X-ray"/>
    <property type="resolution" value="1.90 A"/>
    <property type="chains" value="A=1-394, B/C=1-393, D=1-392"/>
</dbReference>
<dbReference type="PDBsum" id="4WYS"/>
<dbReference type="PDBsum" id="5F0V"/>
<dbReference type="PDBsum" id="5F38"/>
<dbReference type="SMR" id="P76461"/>
<dbReference type="BioGRID" id="4263266">
    <property type="interactions" value="14"/>
</dbReference>
<dbReference type="FunCoup" id="P76461">
    <property type="interactions" value="676"/>
</dbReference>
<dbReference type="IntAct" id="P76461">
    <property type="interactions" value="3"/>
</dbReference>
<dbReference type="STRING" id="511145.b2224"/>
<dbReference type="PaxDb" id="511145-b2224"/>
<dbReference type="EnsemblBacteria" id="AAC75284">
    <property type="protein sequence ID" value="AAC75284"/>
    <property type="gene ID" value="b2224"/>
</dbReference>
<dbReference type="GeneID" id="946727"/>
<dbReference type="KEGG" id="ecj:JW2218"/>
<dbReference type="KEGG" id="eco:b2224"/>
<dbReference type="KEGG" id="ecoc:C3026_12430"/>
<dbReference type="PATRIC" id="fig|1411691.4.peg.11"/>
<dbReference type="EchoBASE" id="EB1623"/>
<dbReference type="eggNOG" id="COG0183">
    <property type="taxonomic scope" value="Bacteria"/>
</dbReference>
<dbReference type="HOGENOM" id="CLU_031026_0_0_6"/>
<dbReference type="InParanoid" id="P76461"/>
<dbReference type="OMA" id="MPEAYVI"/>
<dbReference type="OrthoDB" id="9764638at2"/>
<dbReference type="PhylomeDB" id="P76461"/>
<dbReference type="BioCyc" id="EcoCyc:ACETYL-COA-ACETYLTRANSFER-MONOMER"/>
<dbReference type="BioCyc" id="MetaCyc:ACETYL-COA-ACETYLTRANSFER-MONOMER"/>
<dbReference type="BRENDA" id="2.3.1.9">
    <property type="organism ID" value="2026"/>
</dbReference>
<dbReference type="UniPathway" id="UPA00058">
    <property type="reaction ID" value="UER00101"/>
</dbReference>
<dbReference type="EvolutionaryTrace" id="P76461"/>
<dbReference type="PRO" id="PR:P76461"/>
<dbReference type="Proteomes" id="UP000000625">
    <property type="component" value="Chromosome"/>
</dbReference>
<dbReference type="GO" id="GO:0005737">
    <property type="term" value="C:cytoplasm"/>
    <property type="evidence" value="ECO:0007669"/>
    <property type="project" value="UniProtKB-SubCell"/>
</dbReference>
<dbReference type="GO" id="GO:0032991">
    <property type="term" value="C:protein-containing complex"/>
    <property type="evidence" value="ECO:0000314"/>
    <property type="project" value="EcoCyc"/>
</dbReference>
<dbReference type="GO" id="GO:0003985">
    <property type="term" value="F:acetyl-CoA C-acetyltransferase activity"/>
    <property type="evidence" value="ECO:0000314"/>
    <property type="project" value="EcoCyc"/>
</dbReference>
<dbReference type="GO" id="GO:0042802">
    <property type="term" value="F:identical protein binding"/>
    <property type="evidence" value="ECO:0000314"/>
    <property type="project" value="EcoCyc"/>
</dbReference>
<dbReference type="GO" id="GO:0043442">
    <property type="term" value="P:acetoacetic acid catabolic process"/>
    <property type="evidence" value="ECO:0000315"/>
    <property type="project" value="EcoCyc"/>
</dbReference>
<dbReference type="CDD" id="cd00751">
    <property type="entry name" value="thiolase"/>
    <property type="match status" value="1"/>
</dbReference>
<dbReference type="FunFam" id="3.40.47.10:FF:000010">
    <property type="entry name" value="Acetyl-CoA acetyltransferase (Thiolase)"/>
    <property type="match status" value="1"/>
</dbReference>
<dbReference type="Gene3D" id="3.40.47.10">
    <property type="match status" value="2"/>
</dbReference>
<dbReference type="InterPro" id="IPR002155">
    <property type="entry name" value="Thiolase"/>
</dbReference>
<dbReference type="InterPro" id="IPR016039">
    <property type="entry name" value="Thiolase-like"/>
</dbReference>
<dbReference type="InterPro" id="IPR020615">
    <property type="entry name" value="Thiolase_acyl_enz_int_AS"/>
</dbReference>
<dbReference type="InterPro" id="IPR020610">
    <property type="entry name" value="Thiolase_AS"/>
</dbReference>
<dbReference type="InterPro" id="IPR020617">
    <property type="entry name" value="Thiolase_C"/>
</dbReference>
<dbReference type="InterPro" id="IPR020613">
    <property type="entry name" value="Thiolase_CS"/>
</dbReference>
<dbReference type="InterPro" id="IPR020616">
    <property type="entry name" value="Thiolase_N"/>
</dbReference>
<dbReference type="NCBIfam" id="TIGR01930">
    <property type="entry name" value="AcCoA-C-Actrans"/>
    <property type="match status" value="1"/>
</dbReference>
<dbReference type="PANTHER" id="PTHR18919:SF164">
    <property type="entry name" value="ACETYL-COA ACETYLTRANSFERASE"/>
    <property type="match status" value="1"/>
</dbReference>
<dbReference type="PANTHER" id="PTHR18919">
    <property type="entry name" value="ACETYL-COA C-ACYLTRANSFERASE"/>
    <property type="match status" value="1"/>
</dbReference>
<dbReference type="Pfam" id="PF02803">
    <property type="entry name" value="Thiolase_C"/>
    <property type="match status" value="1"/>
</dbReference>
<dbReference type="Pfam" id="PF00108">
    <property type="entry name" value="Thiolase_N"/>
    <property type="match status" value="1"/>
</dbReference>
<dbReference type="PIRSF" id="PIRSF000429">
    <property type="entry name" value="Ac-CoA_Ac_transf"/>
    <property type="match status" value="1"/>
</dbReference>
<dbReference type="SUPFAM" id="SSF53901">
    <property type="entry name" value="Thiolase-like"/>
    <property type="match status" value="2"/>
</dbReference>
<dbReference type="PROSITE" id="PS00098">
    <property type="entry name" value="THIOLASE_1"/>
    <property type="match status" value="1"/>
</dbReference>
<dbReference type="PROSITE" id="PS00737">
    <property type="entry name" value="THIOLASE_2"/>
    <property type="match status" value="1"/>
</dbReference>
<dbReference type="PROSITE" id="PS00099">
    <property type="entry name" value="THIOLASE_3"/>
    <property type="match status" value="1"/>
</dbReference>
<feature type="chain" id="PRO_0000206406" description="Acetyl-CoA acetyltransferase">
    <location>
        <begin position="1"/>
        <end position="394"/>
    </location>
</feature>
<feature type="active site" description="Acyl-thioester intermediate" evidence="1">
    <location>
        <position position="88"/>
    </location>
</feature>
<feature type="active site" description="Proton acceptor" evidence="2">
    <location>
        <position position="349"/>
    </location>
</feature>
<feature type="active site" description="Proton acceptor" evidence="2">
    <location>
        <position position="379"/>
    </location>
</feature>
<feature type="strand" evidence="5">
    <location>
        <begin position="4"/>
        <end position="12"/>
    </location>
</feature>
<feature type="turn" evidence="5">
    <location>
        <begin position="20"/>
        <end position="23"/>
    </location>
</feature>
<feature type="helix" evidence="5">
    <location>
        <begin position="26"/>
        <end position="41"/>
    </location>
</feature>
<feature type="helix" evidence="5">
    <location>
        <begin position="45"/>
        <end position="47"/>
    </location>
</feature>
<feature type="strand" evidence="5">
    <location>
        <begin position="50"/>
        <end position="54"/>
    </location>
</feature>
<feature type="helix" evidence="5">
    <location>
        <begin position="65"/>
        <end position="72"/>
    </location>
</feature>
<feature type="strand" evidence="5">
    <location>
        <begin position="80"/>
        <end position="85"/>
    </location>
</feature>
<feature type="helix" evidence="4">
    <location>
        <begin position="87"/>
        <end position="89"/>
    </location>
</feature>
<feature type="helix" evidence="5">
    <location>
        <begin position="90"/>
        <end position="103"/>
    </location>
</feature>
<feature type="strand" evidence="5">
    <location>
        <begin position="108"/>
        <end position="118"/>
    </location>
</feature>
<feature type="strand" evidence="5">
    <location>
        <begin position="123"/>
        <end position="125"/>
    </location>
</feature>
<feature type="helix" evidence="5">
    <location>
        <begin position="127"/>
        <end position="129"/>
    </location>
</feature>
<feature type="strand" evidence="5">
    <location>
        <begin position="138"/>
        <end position="142"/>
    </location>
</feature>
<feature type="helix" evidence="5">
    <location>
        <begin position="143"/>
        <end position="147"/>
    </location>
</feature>
<feature type="turn" evidence="5">
    <location>
        <begin position="152"/>
        <end position="154"/>
    </location>
</feature>
<feature type="strand" evidence="5">
    <location>
        <begin position="155"/>
        <end position="157"/>
    </location>
</feature>
<feature type="helix" evidence="5">
    <location>
        <begin position="158"/>
        <end position="169"/>
    </location>
</feature>
<feature type="helix" evidence="5">
    <location>
        <begin position="173"/>
        <end position="193"/>
    </location>
</feature>
<feature type="turn" evidence="5">
    <location>
        <begin position="194"/>
        <end position="199"/>
    </location>
</feature>
<feature type="strand" evidence="5">
    <location>
        <begin position="203"/>
        <end position="206"/>
    </location>
</feature>
<feature type="strand" evidence="5">
    <location>
        <begin position="211"/>
        <end position="214"/>
    </location>
</feature>
<feature type="helix" evidence="5">
    <location>
        <begin position="226"/>
        <end position="231"/>
    </location>
</feature>
<feature type="helix" evidence="6">
    <location>
        <begin position="244"/>
        <end position="246"/>
    </location>
</feature>
<feature type="strand" evidence="5">
    <location>
        <begin position="251"/>
        <end position="261"/>
    </location>
</feature>
<feature type="helix" evidence="5">
    <location>
        <begin position="262"/>
        <end position="267"/>
    </location>
</feature>
<feature type="strand" evidence="5">
    <location>
        <begin position="274"/>
        <end position="283"/>
    </location>
</feature>
<feature type="helix" evidence="5">
    <location>
        <begin position="286"/>
        <end position="291"/>
    </location>
</feature>
<feature type="helix" evidence="5">
    <location>
        <begin position="293"/>
        <end position="303"/>
    </location>
</feature>
<feature type="helix" evidence="5">
    <location>
        <begin position="308"/>
        <end position="310"/>
    </location>
</feature>
<feature type="strand" evidence="5">
    <location>
        <begin position="312"/>
        <end position="316"/>
    </location>
</feature>
<feature type="helix" evidence="5">
    <location>
        <begin position="321"/>
        <end position="331"/>
    </location>
</feature>
<feature type="helix" evidence="5">
    <location>
        <begin position="335"/>
        <end position="337"/>
    </location>
</feature>
<feature type="helix" evidence="5">
    <location>
        <begin position="344"/>
        <end position="347"/>
    </location>
</feature>
<feature type="helix" evidence="5">
    <location>
        <begin position="351"/>
        <end position="368"/>
    </location>
</feature>
<feature type="strand" evidence="5">
    <location>
        <begin position="372"/>
        <end position="380"/>
    </location>
</feature>
<feature type="turn" evidence="5">
    <location>
        <begin position="381"/>
        <end position="383"/>
    </location>
</feature>
<feature type="strand" evidence="5">
    <location>
        <begin position="384"/>
        <end position="391"/>
    </location>
</feature>
<accession>P76461</accession>
<accession>P78176</accession>
<protein>
    <recommendedName>
        <fullName>Acetyl-CoA acetyltransferase</fullName>
        <ecNumber>2.3.1.9</ecNumber>
    </recommendedName>
    <alternativeName>
        <fullName>Acetoacetyl-CoA thiolase</fullName>
    </alternativeName>
</protein>
<reference key="1">
    <citation type="journal article" date="1996" name="DNA Res.">
        <title>A 460-kb DNA sequence of the Escherichia coli K-12 genome corresponding to the 40.1-50.0 min region on the linkage map.</title>
        <authorList>
            <person name="Itoh T."/>
            <person name="Aiba H."/>
            <person name="Baba T."/>
            <person name="Fujita K."/>
            <person name="Hayashi K."/>
            <person name="Inada T."/>
            <person name="Isono K."/>
            <person name="Kasai H."/>
            <person name="Kimura S."/>
            <person name="Kitakawa M."/>
            <person name="Kitagawa M."/>
            <person name="Makino K."/>
            <person name="Miki T."/>
            <person name="Mizobuchi K."/>
            <person name="Mori H."/>
            <person name="Mori T."/>
            <person name="Motomura K."/>
            <person name="Nakade S."/>
            <person name="Nakamura Y."/>
            <person name="Nashimoto H."/>
            <person name="Nishio Y."/>
            <person name="Oshima T."/>
            <person name="Saito N."/>
            <person name="Sampei G."/>
            <person name="Seki Y."/>
            <person name="Sivasundaram S."/>
            <person name="Tagami H."/>
            <person name="Takeda J."/>
            <person name="Takemoto K."/>
            <person name="Wada C."/>
            <person name="Yamamoto Y."/>
            <person name="Horiuchi T."/>
        </authorList>
    </citation>
    <scope>NUCLEOTIDE SEQUENCE [LARGE SCALE GENOMIC DNA]</scope>
    <source>
        <strain>K12 / W3110 / ATCC 27325 / DSM 5911</strain>
    </source>
</reference>
<reference key="2">
    <citation type="journal article" date="1997" name="Science">
        <title>The complete genome sequence of Escherichia coli K-12.</title>
        <authorList>
            <person name="Blattner F.R."/>
            <person name="Plunkett G. III"/>
            <person name="Bloch C.A."/>
            <person name="Perna N.T."/>
            <person name="Burland V."/>
            <person name="Riley M."/>
            <person name="Collado-Vides J."/>
            <person name="Glasner J.D."/>
            <person name="Rode C.K."/>
            <person name="Mayhew G.F."/>
            <person name="Gregor J."/>
            <person name="Davis N.W."/>
            <person name="Kirkpatrick H.A."/>
            <person name="Goeden M.A."/>
            <person name="Rose D.J."/>
            <person name="Mau B."/>
            <person name="Shao Y."/>
        </authorList>
    </citation>
    <scope>NUCLEOTIDE SEQUENCE [LARGE SCALE GENOMIC DNA]</scope>
    <source>
        <strain>K12 / MG1655 / ATCC 47076</strain>
    </source>
</reference>
<reference key="3">
    <citation type="journal article" date="2006" name="Mol. Syst. Biol.">
        <title>Highly accurate genome sequences of Escherichia coli K-12 strains MG1655 and W3110.</title>
        <authorList>
            <person name="Hayashi K."/>
            <person name="Morooka N."/>
            <person name="Yamamoto Y."/>
            <person name="Fujita K."/>
            <person name="Isono K."/>
            <person name="Choi S."/>
            <person name="Ohtsubo E."/>
            <person name="Baba T."/>
            <person name="Wanner B.L."/>
            <person name="Mori H."/>
            <person name="Horiuchi T."/>
        </authorList>
    </citation>
    <scope>NUCLEOTIDE SEQUENCE [LARGE SCALE GENOMIC DNA]</scope>
    <source>
        <strain>K12 / W3110 / ATCC 27325 / DSM 5911</strain>
    </source>
</reference>
<name>ATOB_ECOLI</name>
<sequence>MKNCVIVSAVRTAIGSFNGSLASTSAIDLGATVIKAAIERAKIDSQHVDEVIMGNVLQAGLGQNPARQALLKSGLAETVCGFTVNKVCGSGLKSVALAAQAIQAGQAQSIVAGGMENMSLAPYLLDAKARSGYRLGDGQVYDVILRDGLMCATHGYHMGITAENVAKEYGITREMQDELALHSQRKAAAAIESGAFTAEIVPVNVVTRKKTFVFSQDEFPKANSTAEALGALRPAFDKAGTVTAGNASGINDGAAALVIMEESAALAAGLTPLARIKSYASGGVPPALMGMGPVPATQKALQLAGLQLADIDLIEANEAFAAQFLAVGKNLGFDSEKVNVNGGAIALGHPIGASGARILVTLLHAMQARDKTLGLATLCIGGGQGIAMVIERLN</sequence>
<comment type="catalytic activity">
    <reaction evidence="2">
        <text>2 acetyl-CoA = acetoacetyl-CoA + CoA</text>
        <dbReference type="Rhea" id="RHEA:21036"/>
        <dbReference type="ChEBI" id="CHEBI:57286"/>
        <dbReference type="ChEBI" id="CHEBI:57287"/>
        <dbReference type="ChEBI" id="CHEBI:57288"/>
        <dbReference type="EC" id="2.3.1.9"/>
    </reaction>
</comment>
<comment type="pathway">
    <text>Metabolic intermediate biosynthesis; (R)-mevalonate biosynthesis; (R)-mevalonate from acetyl-CoA: step 1/3.</text>
</comment>
<comment type="subcellular location">
    <subcellularLocation>
        <location evidence="3">Cytoplasm</location>
    </subcellularLocation>
</comment>
<comment type="similarity">
    <text evidence="3">Belongs to the thiolase-like superfamily. Thiolase family.</text>
</comment>
<gene>
    <name type="primary">atoB</name>
    <name type="ordered locus">b2224</name>
    <name type="ordered locus">JW2218</name>
</gene>
<keyword id="KW-0002">3D-structure</keyword>
<keyword id="KW-0012">Acyltransferase</keyword>
<keyword id="KW-0963">Cytoplasm</keyword>
<keyword id="KW-0276">Fatty acid metabolism</keyword>
<keyword id="KW-0443">Lipid metabolism</keyword>
<keyword id="KW-1185">Reference proteome</keyword>
<keyword id="KW-0808">Transferase</keyword>
<proteinExistence type="evidence at protein level"/>
<organism>
    <name type="scientific">Escherichia coli (strain K12)</name>
    <dbReference type="NCBI Taxonomy" id="83333"/>
    <lineage>
        <taxon>Bacteria</taxon>
        <taxon>Pseudomonadati</taxon>
        <taxon>Pseudomonadota</taxon>
        <taxon>Gammaproteobacteria</taxon>
        <taxon>Enterobacterales</taxon>
        <taxon>Enterobacteriaceae</taxon>
        <taxon>Escherichia</taxon>
    </lineage>
</organism>
<evidence type="ECO:0000250" key="1"/>
<evidence type="ECO:0000255" key="2">
    <source>
        <dbReference type="PROSITE-ProRule" id="PRU10020"/>
    </source>
</evidence>
<evidence type="ECO:0000305" key="3"/>
<evidence type="ECO:0007829" key="4">
    <source>
        <dbReference type="PDB" id="4WYS"/>
    </source>
</evidence>
<evidence type="ECO:0007829" key="5">
    <source>
        <dbReference type="PDB" id="5F0V"/>
    </source>
</evidence>
<evidence type="ECO:0007829" key="6">
    <source>
        <dbReference type="PDB" id="5F38"/>
    </source>
</evidence>